<name>HPRK_PEDPA</name>
<gene>
    <name evidence="1" type="primary">hprK</name>
    <name type="ordered locus">PEPE_0441</name>
</gene>
<organism>
    <name type="scientific">Pediococcus pentosaceus (strain ATCC 25745 / CCUG 21536 / LMG 10740 / 183-1w)</name>
    <dbReference type="NCBI Taxonomy" id="278197"/>
    <lineage>
        <taxon>Bacteria</taxon>
        <taxon>Bacillati</taxon>
        <taxon>Bacillota</taxon>
        <taxon>Bacilli</taxon>
        <taxon>Lactobacillales</taxon>
        <taxon>Lactobacillaceae</taxon>
        <taxon>Pediococcus</taxon>
    </lineage>
</organism>
<dbReference type="EC" id="2.7.11.-" evidence="1"/>
<dbReference type="EC" id="2.7.4.-" evidence="1"/>
<dbReference type="EMBL" id="CP000422">
    <property type="protein sequence ID" value="ABJ67537.1"/>
    <property type="molecule type" value="Genomic_DNA"/>
</dbReference>
<dbReference type="RefSeq" id="WP_002834090.1">
    <property type="nucleotide sequence ID" value="NC_008525.1"/>
</dbReference>
<dbReference type="SMR" id="Q03GY5"/>
<dbReference type="STRING" id="278197.PEPE_0441"/>
<dbReference type="GeneID" id="33061577"/>
<dbReference type="KEGG" id="ppe:PEPE_0441"/>
<dbReference type="eggNOG" id="COG1493">
    <property type="taxonomic scope" value="Bacteria"/>
</dbReference>
<dbReference type="HOGENOM" id="CLU_052030_0_1_9"/>
<dbReference type="OrthoDB" id="9778803at2"/>
<dbReference type="Proteomes" id="UP000000773">
    <property type="component" value="Chromosome"/>
</dbReference>
<dbReference type="GO" id="GO:0005524">
    <property type="term" value="F:ATP binding"/>
    <property type="evidence" value="ECO:0007669"/>
    <property type="project" value="UniProtKB-UniRule"/>
</dbReference>
<dbReference type="GO" id="GO:0000287">
    <property type="term" value="F:magnesium ion binding"/>
    <property type="evidence" value="ECO:0007669"/>
    <property type="project" value="UniProtKB-UniRule"/>
</dbReference>
<dbReference type="GO" id="GO:0000155">
    <property type="term" value="F:phosphorelay sensor kinase activity"/>
    <property type="evidence" value="ECO:0007669"/>
    <property type="project" value="InterPro"/>
</dbReference>
<dbReference type="GO" id="GO:0004674">
    <property type="term" value="F:protein serine/threonine kinase activity"/>
    <property type="evidence" value="ECO:0007669"/>
    <property type="project" value="UniProtKB-KW"/>
</dbReference>
<dbReference type="GO" id="GO:0004712">
    <property type="term" value="F:protein serine/threonine/tyrosine kinase activity"/>
    <property type="evidence" value="ECO:0007669"/>
    <property type="project" value="UniProtKB-UniRule"/>
</dbReference>
<dbReference type="GO" id="GO:0006109">
    <property type="term" value="P:regulation of carbohydrate metabolic process"/>
    <property type="evidence" value="ECO:0007669"/>
    <property type="project" value="UniProtKB-UniRule"/>
</dbReference>
<dbReference type="CDD" id="cd01918">
    <property type="entry name" value="HprK_C"/>
    <property type="match status" value="1"/>
</dbReference>
<dbReference type="FunFam" id="3.40.50.300:FF:000174">
    <property type="entry name" value="HPr kinase/phosphorylase"/>
    <property type="match status" value="1"/>
</dbReference>
<dbReference type="Gene3D" id="3.40.1390.20">
    <property type="entry name" value="HprK N-terminal domain-like"/>
    <property type="match status" value="1"/>
</dbReference>
<dbReference type="Gene3D" id="3.40.50.300">
    <property type="entry name" value="P-loop containing nucleotide triphosphate hydrolases"/>
    <property type="match status" value="1"/>
</dbReference>
<dbReference type="HAMAP" id="MF_01249">
    <property type="entry name" value="HPr_kinase"/>
    <property type="match status" value="1"/>
</dbReference>
<dbReference type="InterPro" id="IPR003755">
    <property type="entry name" value="HPr(Ser)_kin/Pase"/>
</dbReference>
<dbReference type="InterPro" id="IPR011104">
    <property type="entry name" value="Hpr_kin/Pase_C"/>
</dbReference>
<dbReference type="InterPro" id="IPR011126">
    <property type="entry name" value="Hpr_kin/Pase_Hpr_N"/>
</dbReference>
<dbReference type="InterPro" id="IPR027417">
    <property type="entry name" value="P-loop_NTPase"/>
</dbReference>
<dbReference type="InterPro" id="IPR028979">
    <property type="entry name" value="Ser_kin/Pase_Hpr-like_N_sf"/>
</dbReference>
<dbReference type="NCBIfam" id="TIGR00679">
    <property type="entry name" value="hpr-ser"/>
    <property type="match status" value="1"/>
</dbReference>
<dbReference type="PANTHER" id="PTHR30305:SF1">
    <property type="entry name" value="HPR KINASE_PHOSPHORYLASE"/>
    <property type="match status" value="1"/>
</dbReference>
<dbReference type="PANTHER" id="PTHR30305">
    <property type="entry name" value="PROTEIN YJDM-RELATED"/>
    <property type="match status" value="1"/>
</dbReference>
<dbReference type="Pfam" id="PF07475">
    <property type="entry name" value="Hpr_kinase_C"/>
    <property type="match status" value="1"/>
</dbReference>
<dbReference type="Pfam" id="PF02603">
    <property type="entry name" value="Hpr_kinase_N"/>
    <property type="match status" value="1"/>
</dbReference>
<dbReference type="SUPFAM" id="SSF75138">
    <property type="entry name" value="HprK N-terminal domain-like"/>
    <property type="match status" value="1"/>
</dbReference>
<dbReference type="SUPFAM" id="SSF53795">
    <property type="entry name" value="PEP carboxykinase-like"/>
    <property type="match status" value="1"/>
</dbReference>
<proteinExistence type="inferred from homology"/>
<sequence length="312" mass="35310">MADGVSVSELVEKIRLDVFYGDELLEQKKVTVSDISRPGLELTNYFKFYPHERIQLFGETEISYAKDSMTKDERTKIYDRMADVDTPAFVVSRGLPIPEELIQAAKNNQVPILTSTLPTSRLLSNMTNFLEDRLAERDSIHGELLEIYGLGVLITGDSGIGKSETALDLIKRGHRLIADDRVDIYQQDEQTLIGEAPRILRHLLEIRGVGIIDVMNLFGASAVKNHTEISVIVHLQNWDKDAHFDRLGNGEQTRHFFELDIPKITIPVRVGRNLGDIIEAATMNFRAKNMGYDATKVFDRNLNELIKDNSQK</sequence>
<accession>Q03GY5</accession>
<keyword id="KW-0067">ATP-binding</keyword>
<keyword id="KW-0119">Carbohydrate metabolism</keyword>
<keyword id="KW-0418">Kinase</keyword>
<keyword id="KW-0460">Magnesium</keyword>
<keyword id="KW-0479">Metal-binding</keyword>
<keyword id="KW-0511">Multifunctional enzyme</keyword>
<keyword id="KW-0547">Nucleotide-binding</keyword>
<keyword id="KW-0723">Serine/threonine-protein kinase</keyword>
<keyword id="KW-0808">Transferase</keyword>
<reference key="1">
    <citation type="journal article" date="2006" name="Proc. Natl. Acad. Sci. U.S.A.">
        <title>Comparative genomics of the lactic acid bacteria.</title>
        <authorList>
            <person name="Makarova K.S."/>
            <person name="Slesarev A."/>
            <person name="Wolf Y.I."/>
            <person name="Sorokin A."/>
            <person name="Mirkin B."/>
            <person name="Koonin E.V."/>
            <person name="Pavlov A."/>
            <person name="Pavlova N."/>
            <person name="Karamychev V."/>
            <person name="Polouchine N."/>
            <person name="Shakhova V."/>
            <person name="Grigoriev I."/>
            <person name="Lou Y."/>
            <person name="Rohksar D."/>
            <person name="Lucas S."/>
            <person name="Huang K."/>
            <person name="Goodstein D.M."/>
            <person name="Hawkins T."/>
            <person name="Plengvidhya V."/>
            <person name="Welker D."/>
            <person name="Hughes J."/>
            <person name="Goh Y."/>
            <person name="Benson A."/>
            <person name="Baldwin K."/>
            <person name="Lee J.-H."/>
            <person name="Diaz-Muniz I."/>
            <person name="Dosti B."/>
            <person name="Smeianov V."/>
            <person name="Wechter W."/>
            <person name="Barabote R."/>
            <person name="Lorca G."/>
            <person name="Altermann E."/>
            <person name="Barrangou R."/>
            <person name="Ganesan B."/>
            <person name="Xie Y."/>
            <person name="Rawsthorne H."/>
            <person name="Tamir D."/>
            <person name="Parker C."/>
            <person name="Breidt F."/>
            <person name="Broadbent J.R."/>
            <person name="Hutkins R."/>
            <person name="O'Sullivan D."/>
            <person name="Steele J."/>
            <person name="Unlu G."/>
            <person name="Saier M.H. Jr."/>
            <person name="Klaenhammer T."/>
            <person name="Richardson P."/>
            <person name="Kozyavkin S."/>
            <person name="Weimer B.C."/>
            <person name="Mills D.A."/>
        </authorList>
    </citation>
    <scope>NUCLEOTIDE SEQUENCE [LARGE SCALE GENOMIC DNA]</scope>
    <source>
        <strain>ATCC 25745 / CCUG 21536 / LMG 10740 / 183-1w</strain>
    </source>
</reference>
<evidence type="ECO:0000255" key="1">
    <source>
        <dbReference type="HAMAP-Rule" id="MF_01249"/>
    </source>
</evidence>
<feature type="chain" id="PRO_1000067163" description="HPr kinase/phosphorylase">
    <location>
        <begin position="1"/>
        <end position="312"/>
    </location>
</feature>
<feature type="region of interest" description="Important for the catalytic mechanism of both phosphorylation and dephosphorylation" evidence="1">
    <location>
        <begin position="204"/>
        <end position="213"/>
    </location>
</feature>
<feature type="region of interest" description="Important for the catalytic mechanism of dephosphorylation" evidence="1">
    <location>
        <begin position="267"/>
        <end position="272"/>
    </location>
</feature>
<feature type="active site" evidence="1">
    <location>
        <position position="141"/>
    </location>
</feature>
<feature type="active site" evidence="1">
    <location>
        <position position="162"/>
    </location>
</feature>
<feature type="active site" description="Proton acceptor; for phosphorylation activity. Proton donor; for dephosphorylation activity" evidence="1">
    <location>
        <position position="180"/>
    </location>
</feature>
<feature type="active site" evidence="1">
    <location>
        <position position="246"/>
    </location>
</feature>
<feature type="binding site" evidence="1">
    <location>
        <begin position="156"/>
        <end position="163"/>
    </location>
    <ligand>
        <name>ATP</name>
        <dbReference type="ChEBI" id="CHEBI:30616"/>
    </ligand>
</feature>
<feature type="binding site" evidence="1">
    <location>
        <position position="163"/>
    </location>
    <ligand>
        <name>Mg(2+)</name>
        <dbReference type="ChEBI" id="CHEBI:18420"/>
    </ligand>
</feature>
<feature type="binding site" evidence="1">
    <location>
        <position position="205"/>
    </location>
    <ligand>
        <name>Mg(2+)</name>
        <dbReference type="ChEBI" id="CHEBI:18420"/>
    </ligand>
</feature>
<comment type="function">
    <text evidence="1">Catalyzes the ATP- as well as the pyrophosphate-dependent phosphorylation of a specific serine residue in HPr, a phosphocarrier protein of the phosphoenolpyruvate-dependent sugar phosphotransferase system (PTS). HprK/P also catalyzes the pyrophosphate-producing, inorganic phosphate-dependent dephosphorylation (phosphorolysis) of seryl-phosphorylated HPr (P-Ser-HPr). The two antagonistic activities of HprK/P are regulated by several intracellular metabolites, which change their concentration in response to the absence or presence of rapidly metabolisable carbon sources (glucose, fructose, etc.) in the growth medium. Therefore, by controlling the phosphorylation state of HPr, HPrK/P is a sensor enzyme that plays a major role in the regulation of carbon metabolism and sugar transport: it mediates carbon catabolite repression (CCR), and regulates PTS-catalyzed carbohydrate uptake and inducer exclusion.</text>
</comment>
<comment type="catalytic activity">
    <reaction evidence="1">
        <text>[HPr protein]-L-serine + ATP = [HPr protein]-O-phospho-L-serine + ADP + H(+)</text>
        <dbReference type="Rhea" id="RHEA:46600"/>
        <dbReference type="Rhea" id="RHEA-COMP:11602"/>
        <dbReference type="Rhea" id="RHEA-COMP:11603"/>
        <dbReference type="ChEBI" id="CHEBI:15378"/>
        <dbReference type="ChEBI" id="CHEBI:29999"/>
        <dbReference type="ChEBI" id="CHEBI:30616"/>
        <dbReference type="ChEBI" id="CHEBI:83421"/>
        <dbReference type="ChEBI" id="CHEBI:456216"/>
    </reaction>
</comment>
<comment type="catalytic activity">
    <reaction evidence="1">
        <text>[HPr protein]-O-phospho-L-serine + phosphate + H(+) = [HPr protein]-L-serine + diphosphate</text>
        <dbReference type="Rhea" id="RHEA:46604"/>
        <dbReference type="Rhea" id="RHEA-COMP:11602"/>
        <dbReference type="Rhea" id="RHEA-COMP:11603"/>
        <dbReference type="ChEBI" id="CHEBI:15378"/>
        <dbReference type="ChEBI" id="CHEBI:29999"/>
        <dbReference type="ChEBI" id="CHEBI:33019"/>
        <dbReference type="ChEBI" id="CHEBI:43474"/>
        <dbReference type="ChEBI" id="CHEBI:83421"/>
    </reaction>
</comment>
<comment type="cofactor">
    <cofactor evidence="1">
        <name>Mg(2+)</name>
        <dbReference type="ChEBI" id="CHEBI:18420"/>
    </cofactor>
</comment>
<comment type="subunit">
    <text evidence="1">Homohexamer.</text>
</comment>
<comment type="domain">
    <text evidence="1">The Walker A ATP-binding motif also binds Pi and PPi.</text>
</comment>
<comment type="miscellaneous">
    <text evidence="1">Both phosphorylation and phosphorolysis are carried out by the same active site and suggest a common mechanism for both reactions.</text>
</comment>
<comment type="similarity">
    <text evidence="1">Belongs to the HPrK/P family.</text>
</comment>
<protein>
    <recommendedName>
        <fullName evidence="1">HPr kinase/phosphorylase</fullName>
        <shortName evidence="1">HPrK/P</shortName>
        <ecNumber evidence="1">2.7.11.-</ecNumber>
        <ecNumber evidence="1">2.7.4.-</ecNumber>
    </recommendedName>
    <alternativeName>
        <fullName evidence="1">HPr(Ser) kinase/phosphorylase</fullName>
    </alternativeName>
</protein>